<name>GTPS_CITLI</name>
<dbReference type="EC" id="4.2.3.114"/>
<dbReference type="EMBL" id="AF514286">
    <property type="protein sequence ID" value="AAM53943.1"/>
    <property type="molecule type" value="mRNA"/>
</dbReference>
<dbReference type="SMR" id="Q8L5K4"/>
<dbReference type="KEGG" id="ag:AAM53943"/>
<dbReference type="BRENDA" id="4.2.3.114">
    <property type="organism ID" value="1413"/>
</dbReference>
<dbReference type="UniPathway" id="UPA00213"/>
<dbReference type="GO" id="GO:0009507">
    <property type="term" value="C:chloroplast"/>
    <property type="evidence" value="ECO:0007669"/>
    <property type="project" value="UniProtKB-SubCell"/>
</dbReference>
<dbReference type="GO" id="GO:0102903">
    <property type="term" value="F:gamma-terpinene synthase activity"/>
    <property type="evidence" value="ECO:0007669"/>
    <property type="project" value="UniProtKB-EC"/>
</dbReference>
<dbReference type="GO" id="GO:0000287">
    <property type="term" value="F:magnesium ion binding"/>
    <property type="evidence" value="ECO:0000314"/>
    <property type="project" value="UniProtKB"/>
</dbReference>
<dbReference type="GO" id="GO:0010333">
    <property type="term" value="F:terpene synthase activity"/>
    <property type="evidence" value="ECO:0000314"/>
    <property type="project" value="UniProtKB"/>
</dbReference>
<dbReference type="GO" id="GO:0016102">
    <property type="term" value="P:diterpenoid biosynthetic process"/>
    <property type="evidence" value="ECO:0007669"/>
    <property type="project" value="InterPro"/>
</dbReference>
<dbReference type="GO" id="GO:0033383">
    <property type="term" value="P:geranyl diphosphate metabolic process"/>
    <property type="evidence" value="ECO:0000314"/>
    <property type="project" value="UniProtKB"/>
</dbReference>
<dbReference type="CDD" id="cd00684">
    <property type="entry name" value="Terpene_cyclase_plant_C1"/>
    <property type="match status" value="1"/>
</dbReference>
<dbReference type="FunFam" id="1.10.600.10:FF:000007">
    <property type="entry name" value="Isoprene synthase, chloroplastic"/>
    <property type="match status" value="1"/>
</dbReference>
<dbReference type="FunFam" id="1.50.10.130:FF:000001">
    <property type="entry name" value="Isoprene synthase, chloroplastic"/>
    <property type="match status" value="1"/>
</dbReference>
<dbReference type="Gene3D" id="1.10.600.10">
    <property type="entry name" value="Farnesyl Diphosphate Synthase"/>
    <property type="match status" value="1"/>
</dbReference>
<dbReference type="Gene3D" id="1.50.10.130">
    <property type="entry name" value="Terpene synthase, N-terminal domain"/>
    <property type="match status" value="1"/>
</dbReference>
<dbReference type="InterPro" id="IPR008949">
    <property type="entry name" value="Isoprenoid_synthase_dom_sf"/>
</dbReference>
<dbReference type="InterPro" id="IPR034741">
    <property type="entry name" value="Terpene_cyclase-like_1_C"/>
</dbReference>
<dbReference type="InterPro" id="IPR044814">
    <property type="entry name" value="Terpene_cyclase_plant_C1"/>
</dbReference>
<dbReference type="InterPro" id="IPR001906">
    <property type="entry name" value="Terpene_synth_N"/>
</dbReference>
<dbReference type="InterPro" id="IPR036965">
    <property type="entry name" value="Terpene_synth_N_sf"/>
</dbReference>
<dbReference type="InterPro" id="IPR050148">
    <property type="entry name" value="Terpene_synthase-like"/>
</dbReference>
<dbReference type="InterPro" id="IPR005630">
    <property type="entry name" value="Terpene_synthase_metal-bd"/>
</dbReference>
<dbReference type="InterPro" id="IPR008930">
    <property type="entry name" value="Terpenoid_cyclase/PrenylTrfase"/>
</dbReference>
<dbReference type="PANTHER" id="PTHR31225">
    <property type="entry name" value="OS04G0344100 PROTEIN-RELATED"/>
    <property type="match status" value="1"/>
</dbReference>
<dbReference type="PANTHER" id="PTHR31225:SF9">
    <property type="entry name" value="TERPENE SYNTHASE 10"/>
    <property type="match status" value="1"/>
</dbReference>
<dbReference type="Pfam" id="PF01397">
    <property type="entry name" value="Terpene_synth"/>
    <property type="match status" value="1"/>
</dbReference>
<dbReference type="Pfam" id="PF03936">
    <property type="entry name" value="Terpene_synth_C"/>
    <property type="match status" value="1"/>
</dbReference>
<dbReference type="SFLD" id="SFLDS00005">
    <property type="entry name" value="Isoprenoid_Synthase_Type_I"/>
    <property type="match status" value="1"/>
</dbReference>
<dbReference type="SFLD" id="SFLDG01019">
    <property type="entry name" value="Terpene_Cyclase_Like_1_C_Termi"/>
    <property type="match status" value="1"/>
</dbReference>
<dbReference type="SUPFAM" id="SSF48239">
    <property type="entry name" value="Terpenoid cyclases/Protein prenyltransferases"/>
    <property type="match status" value="1"/>
</dbReference>
<dbReference type="SUPFAM" id="SSF48576">
    <property type="entry name" value="Terpenoid synthases"/>
    <property type="match status" value="1"/>
</dbReference>
<organism>
    <name type="scientific">Citrus limon</name>
    <name type="common">Lemon</name>
    <name type="synonym">Citrus medica var. limon</name>
    <dbReference type="NCBI Taxonomy" id="2708"/>
    <lineage>
        <taxon>Eukaryota</taxon>
        <taxon>Viridiplantae</taxon>
        <taxon>Streptophyta</taxon>
        <taxon>Embryophyta</taxon>
        <taxon>Tracheophyta</taxon>
        <taxon>Spermatophyta</taxon>
        <taxon>Magnoliopsida</taxon>
        <taxon>eudicotyledons</taxon>
        <taxon>Gunneridae</taxon>
        <taxon>Pentapetalae</taxon>
        <taxon>rosids</taxon>
        <taxon>malvids</taxon>
        <taxon>Sapindales</taxon>
        <taxon>Rutaceae</taxon>
        <taxon>Aurantioideae</taxon>
        <taxon>Citrus</taxon>
    </lineage>
</organism>
<keyword id="KW-0150">Chloroplast</keyword>
<keyword id="KW-0456">Lyase</keyword>
<keyword id="KW-0460">Magnesium</keyword>
<keyword id="KW-0464">Manganese</keyword>
<keyword id="KW-0479">Metal-binding</keyword>
<keyword id="KW-0934">Plastid</keyword>
<keyword id="KW-0809">Transit peptide</keyword>
<protein>
    <recommendedName>
        <fullName>Gamma-terpinene synthase, chloroplastic</fullName>
        <shortName>ClgammaTS</shortName>
        <ecNumber>4.2.3.114</ecNumber>
    </recommendedName>
</protein>
<proteinExistence type="evidence at protein level"/>
<feature type="transit peptide" description="Chloroplast" evidence="2">
    <location>
        <begin position="1"/>
        <end position="40"/>
    </location>
</feature>
<feature type="chain" id="PRO_0000418652" description="Gamma-terpinene synthase, chloroplastic">
    <location>
        <begin position="41"/>
        <end position="600"/>
    </location>
</feature>
<feature type="short sequence motif" description="DDXXD motif">
    <location>
        <begin position="353"/>
        <end position="357"/>
    </location>
</feature>
<feature type="binding site" evidence="1">
    <location>
        <position position="353"/>
    </location>
    <ligand>
        <name>Mg(2+)</name>
        <dbReference type="ChEBI" id="CHEBI:18420"/>
        <label>1</label>
    </ligand>
</feature>
<feature type="binding site" evidence="1">
    <location>
        <position position="353"/>
    </location>
    <ligand>
        <name>Mg(2+)</name>
        <dbReference type="ChEBI" id="CHEBI:18420"/>
        <label>2</label>
    </ligand>
</feature>
<feature type="binding site" evidence="1">
    <location>
        <position position="357"/>
    </location>
    <ligand>
        <name>Mg(2+)</name>
        <dbReference type="ChEBI" id="CHEBI:18420"/>
        <label>1</label>
    </ligand>
</feature>
<feature type="binding site" evidence="1">
    <location>
        <position position="357"/>
    </location>
    <ligand>
        <name>Mg(2+)</name>
        <dbReference type="ChEBI" id="CHEBI:18420"/>
        <label>2</label>
    </ligand>
</feature>
<feature type="binding site" evidence="1">
    <location>
        <position position="498"/>
    </location>
    <ligand>
        <name>Mg(2+)</name>
        <dbReference type="ChEBI" id="CHEBI:18420"/>
        <label>3</label>
    </ligand>
</feature>
<feature type="binding site" evidence="1">
    <location>
        <position position="506"/>
    </location>
    <ligand>
        <name>Mg(2+)</name>
        <dbReference type="ChEBI" id="CHEBI:18420"/>
        <label>3</label>
    </ligand>
</feature>
<reference key="1">
    <citation type="journal article" date="2002" name="Eur. J. Biochem.">
        <title>Monoterpene biosynthesis in lemon (Citrus limon): cDNA isolation and functional analysis of four monoterpene synthases.</title>
        <authorList>
            <person name="Lucker J."/>
            <person name="El Tamer M.K."/>
            <person name="Schwab W."/>
            <person name="Verstappen F.W.A."/>
            <person name="van der Plas L.H.W."/>
            <person name="Bouwmeester H.J."/>
            <person name="Verhoeven H.A."/>
        </authorList>
    </citation>
    <scope>NUCLEOTIDE SEQUENCE [MRNA]</scope>
    <scope>FUNCTION</scope>
    <scope>CATALYTIC ACTIVITY</scope>
    <scope>COFACTOR</scope>
    <scope>ACTIVITY REGULATION</scope>
    <scope>BIOPHYSICOCHEMICAL PROPERTIES</scope>
    <source>
        <tissue>Peelings</tissue>
    </source>
</reference>
<sequence length="600" mass="69522">MALNLLSSLPAACNFTRLSLPLSSKVNGFVPPITQVQYPMAASTSSIKPVDQTIIRRSADYGPTIWSFDYIQSLDSKYKGESYARQLEKLKEQVSAMLQQDNKVVDLDPLHQLELIDNLHRLGVSYHFEDEIKRTLDRIHNKNTNKSLYARALKFRILRQYGYKTPVKETFSRFMDEKGSFKLSSHSDECKGMLALYEAAYLLVEEESSIFRDAIRFTTAYLKEWVAKHDIDKNDNEYLCTLVKHALELPLHWRMRRLEARWFIDVYESGPDMNPILLELAKVDYNIVQAVHQEDLKYVSRWWKKTGLGEKLNFARDRVVENFFWTVGDIFEPQFGYCRRMSAMVNCLLTSIDDVYDVYGTLDELELFTDAVERWDATTTEQLPYYMKLCFHALYNSVNEMGFIALRDQEVGMIIPYLKKAWADQCKSYLVEAKWYNSGYIPTLQEYMENAWISVTAPVMLLHAYAFTANPITKEALEFLQDSPDIIRISSMIVRLEDDLGTSSDELKRGDVPKSIQCYMHETGVSEDEAREHIRDLIAETWMKMNSARFGNPPYLPDVFIGIAMNLVRMSQCMYLYGDGHGVQENTKDRVLSLFIDPIP</sequence>
<evidence type="ECO:0000250" key="1"/>
<evidence type="ECO:0000255" key="2"/>
<evidence type="ECO:0000269" key="3">
    <source>
    </source>
</evidence>
<evidence type="ECO:0000305" key="4"/>
<accession>Q8L5K4</accession>
<comment type="function">
    <text evidence="3">Monoterpene synthase which catalyzes the conversion of geranyl diphosphate to gamma-terpinene and the minor products limonene, alpha-pinene, beta-pinene, alpha-terpinolene, alpha-thujene, alpha-terpinene, myrcene and sabinene.</text>
</comment>
<comment type="catalytic activity">
    <reaction evidence="3">
        <text>(2E)-geranyl diphosphate = gamma-terpinene + diphosphate</text>
        <dbReference type="Rhea" id="RHEA:32559"/>
        <dbReference type="ChEBI" id="CHEBI:10577"/>
        <dbReference type="ChEBI" id="CHEBI:33019"/>
        <dbReference type="ChEBI" id="CHEBI:58057"/>
        <dbReference type="EC" id="4.2.3.114"/>
    </reaction>
</comment>
<comment type="cofactor">
    <cofactor evidence="3">
        <name>Mn(2+)</name>
        <dbReference type="ChEBI" id="CHEBI:29035"/>
    </cofactor>
    <cofactor evidence="3">
        <name>Mg(2+)</name>
        <dbReference type="ChEBI" id="CHEBI:18420"/>
    </cofactor>
    <text evidence="3">Manganese &gt; magnesium.</text>
</comment>
<comment type="activity regulation">
    <text evidence="3">Inhibited by 100 mM KCl.</text>
</comment>
<comment type="biophysicochemical properties">
    <kinetics>
        <KM evidence="3">2.7 uM for geranyl diphosphate</KM>
    </kinetics>
    <phDependence>
        <text evidence="3">Optimum pH is 7.0.</text>
    </phDependence>
</comment>
<comment type="pathway">
    <text>Secondary metabolite biosynthesis; terpenoid biosynthesis.</text>
</comment>
<comment type="subcellular location">
    <subcellularLocation>
        <location evidence="4">Plastid</location>
        <location evidence="4">Chloroplast</location>
    </subcellularLocation>
</comment>
<comment type="domain">
    <text evidence="1">The Asp-Asp-Xaa-Xaa-Asp/Glu (DDXXD/E) motif is important for the catalytic activity, presumably through binding to Mg(2+).</text>
</comment>
<comment type="similarity">
    <text evidence="4">Belongs to the terpene synthase family.</text>
</comment>